<accession>Q49XD0</accession>
<feature type="chain" id="PRO_0000356701" description="Large ribosomal subunit protein bL33B">
    <location>
        <begin position="1"/>
        <end position="49"/>
    </location>
</feature>
<protein>
    <recommendedName>
        <fullName evidence="1">Large ribosomal subunit protein bL33B</fullName>
    </recommendedName>
    <alternativeName>
        <fullName evidence="1">50S ribosomal protein L33 2</fullName>
    </alternativeName>
</protein>
<organism>
    <name type="scientific">Staphylococcus saprophyticus subsp. saprophyticus (strain ATCC 15305 / DSM 20229 / NCIMB 8711 / NCTC 7292 / S-41)</name>
    <dbReference type="NCBI Taxonomy" id="342451"/>
    <lineage>
        <taxon>Bacteria</taxon>
        <taxon>Bacillati</taxon>
        <taxon>Bacillota</taxon>
        <taxon>Bacilli</taxon>
        <taxon>Bacillales</taxon>
        <taxon>Staphylococcaceae</taxon>
        <taxon>Staphylococcus</taxon>
    </lineage>
</organism>
<evidence type="ECO:0000255" key="1">
    <source>
        <dbReference type="HAMAP-Rule" id="MF_00294"/>
    </source>
</evidence>
<sequence length="49" mass="5921">MRVNITLACTECGDRNYISTKNKRNHPERIELKKFCPRLNKYTLHRETK</sequence>
<comment type="similarity">
    <text evidence="1">Belongs to the bacterial ribosomal protein bL33 family.</text>
</comment>
<proteinExistence type="inferred from homology"/>
<reference key="1">
    <citation type="journal article" date="2005" name="Proc. Natl. Acad. Sci. U.S.A.">
        <title>Whole genome sequence of Staphylococcus saprophyticus reveals the pathogenesis of uncomplicated urinary tract infection.</title>
        <authorList>
            <person name="Kuroda M."/>
            <person name="Yamashita A."/>
            <person name="Hirakawa H."/>
            <person name="Kumano M."/>
            <person name="Morikawa K."/>
            <person name="Higashide M."/>
            <person name="Maruyama A."/>
            <person name="Inose Y."/>
            <person name="Matoba K."/>
            <person name="Toh H."/>
            <person name="Kuhara S."/>
            <person name="Hattori M."/>
            <person name="Ohta T."/>
        </authorList>
    </citation>
    <scope>NUCLEOTIDE SEQUENCE [LARGE SCALE GENOMIC DNA]</scope>
    <source>
        <strain>ATCC 15305 / DSM 20229 / NCIMB 8711 / NCTC 7292 / S-41</strain>
    </source>
</reference>
<gene>
    <name evidence="1" type="primary">rpmG2</name>
    <name type="ordered locus">SSP1422</name>
</gene>
<dbReference type="EMBL" id="AP008934">
    <property type="protein sequence ID" value="BAE18567.1"/>
    <property type="molecule type" value="Genomic_DNA"/>
</dbReference>
<dbReference type="SMR" id="Q49XD0"/>
<dbReference type="KEGG" id="ssp:SSP1422"/>
<dbReference type="eggNOG" id="COG0267">
    <property type="taxonomic scope" value="Bacteria"/>
</dbReference>
<dbReference type="HOGENOM" id="CLU_190949_0_2_9"/>
<dbReference type="OrthoDB" id="197660at2"/>
<dbReference type="Proteomes" id="UP000006371">
    <property type="component" value="Chromosome"/>
</dbReference>
<dbReference type="GO" id="GO:0005737">
    <property type="term" value="C:cytoplasm"/>
    <property type="evidence" value="ECO:0007669"/>
    <property type="project" value="UniProtKB-ARBA"/>
</dbReference>
<dbReference type="GO" id="GO:1990904">
    <property type="term" value="C:ribonucleoprotein complex"/>
    <property type="evidence" value="ECO:0007669"/>
    <property type="project" value="UniProtKB-KW"/>
</dbReference>
<dbReference type="GO" id="GO:0005840">
    <property type="term" value="C:ribosome"/>
    <property type="evidence" value="ECO:0007669"/>
    <property type="project" value="UniProtKB-KW"/>
</dbReference>
<dbReference type="GO" id="GO:0003735">
    <property type="term" value="F:structural constituent of ribosome"/>
    <property type="evidence" value="ECO:0007669"/>
    <property type="project" value="InterPro"/>
</dbReference>
<dbReference type="GO" id="GO:0006412">
    <property type="term" value="P:translation"/>
    <property type="evidence" value="ECO:0007669"/>
    <property type="project" value="UniProtKB-UniRule"/>
</dbReference>
<dbReference type="Gene3D" id="2.20.28.120">
    <property type="entry name" value="Ribosomal protein L33"/>
    <property type="match status" value="1"/>
</dbReference>
<dbReference type="HAMAP" id="MF_00294">
    <property type="entry name" value="Ribosomal_bL33"/>
    <property type="match status" value="1"/>
</dbReference>
<dbReference type="InterPro" id="IPR001705">
    <property type="entry name" value="Ribosomal_bL33"/>
</dbReference>
<dbReference type="InterPro" id="IPR018264">
    <property type="entry name" value="Ribosomal_bL33_CS"/>
</dbReference>
<dbReference type="InterPro" id="IPR038584">
    <property type="entry name" value="Ribosomal_bL33_sf"/>
</dbReference>
<dbReference type="InterPro" id="IPR011332">
    <property type="entry name" value="Ribosomal_zn-bd"/>
</dbReference>
<dbReference type="NCBIfam" id="NF001764">
    <property type="entry name" value="PRK00504.1"/>
    <property type="match status" value="1"/>
</dbReference>
<dbReference type="NCBIfam" id="NF001860">
    <property type="entry name" value="PRK00595.1"/>
    <property type="match status" value="1"/>
</dbReference>
<dbReference type="NCBIfam" id="TIGR01023">
    <property type="entry name" value="rpmG_bact"/>
    <property type="match status" value="1"/>
</dbReference>
<dbReference type="PANTHER" id="PTHR43168">
    <property type="entry name" value="50S RIBOSOMAL PROTEIN L33, CHLOROPLASTIC"/>
    <property type="match status" value="1"/>
</dbReference>
<dbReference type="PANTHER" id="PTHR43168:SF2">
    <property type="entry name" value="LARGE RIBOSOMAL SUBUNIT PROTEIN BL33C"/>
    <property type="match status" value="1"/>
</dbReference>
<dbReference type="Pfam" id="PF00471">
    <property type="entry name" value="Ribosomal_L33"/>
    <property type="match status" value="1"/>
</dbReference>
<dbReference type="SUPFAM" id="SSF57829">
    <property type="entry name" value="Zn-binding ribosomal proteins"/>
    <property type="match status" value="1"/>
</dbReference>
<dbReference type="PROSITE" id="PS00582">
    <property type="entry name" value="RIBOSOMAL_L33"/>
    <property type="match status" value="1"/>
</dbReference>
<name>RL332_STAS1</name>
<keyword id="KW-1185">Reference proteome</keyword>
<keyword id="KW-0687">Ribonucleoprotein</keyword>
<keyword id="KW-0689">Ribosomal protein</keyword>